<accession>O32859</accession>
<proteinExistence type="inferred from homology"/>
<evidence type="ECO:0000255" key="1"/>
<evidence type="ECO:0000269" key="2">
    <source>
    </source>
</evidence>
<evidence type="ECO:0000269" key="3">
    <source>
    </source>
</evidence>
<evidence type="ECO:0000303" key="4">
    <source>
    </source>
</evidence>
<evidence type="ECO:0000305" key="5"/>
<evidence type="ECO:0000305" key="6">
    <source>
    </source>
</evidence>
<comment type="function">
    <text evidence="2 3">Efflux pump that contributes to intrinsic antibiotic resistance (PubMed:16373429, PubMed:9811639). The pump uses the electrochemical gradient as a source of energy (PubMed:16373429). Confers low-level resistance to tetracycline and to several aminoglycosides, including streptomycin, gentamicin, 2'-N-ethylnetilmicin and 6'-N-ethylnetilmicin (PubMed:16373429, PubMed:9811639).</text>
</comment>
<comment type="activity regulation">
    <text evidence="2">Efflux activity is inhibited by carbonyl cyanide m-chlorophenylhydrazone (CCCP) and reserpine, but not by o-vanadate or chlorpromazine (CPZ).</text>
</comment>
<comment type="subcellular location">
    <subcellularLocation>
        <location evidence="6">Cell inner membrane</location>
        <topology evidence="1">Multi-pass membrane protein</topology>
    </subcellularLocation>
</comment>
<comment type="similarity">
    <text evidence="5">Belongs to the major facilitator superfamily. Drug:H(+) antiporter-3 (DHA3) (TC 2.A.1.21) family.</text>
</comment>
<dbReference type="EMBL" id="AJ000283">
    <property type="protein sequence ID" value="CAA03986.1"/>
    <property type="molecule type" value="Genomic_DNA"/>
</dbReference>
<dbReference type="SMR" id="O32859"/>
<dbReference type="STRING" id="1766.XA26_44520"/>
<dbReference type="CARD" id="ARO:3000343">
    <property type="molecule name" value="tap"/>
    <property type="mechanism identifier" value="ARO:0010000"/>
    <property type="mechanism name" value="antibiotic efflux"/>
</dbReference>
<dbReference type="TCDB" id="2.A.1.21.4">
    <property type="family name" value="the major facilitator superfamily (mfs)"/>
</dbReference>
<dbReference type="GO" id="GO:0005886">
    <property type="term" value="C:plasma membrane"/>
    <property type="evidence" value="ECO:0007669"/>
    <property type="project" value="UniProtKB-SubCell"/>
</dbReference>
<dbReference type="GO" id="GO:0022857">
    <property type="term" value="F:transmembrane transporter activity"/>
    <property type="evidence" value="ECO:0007669"/>
    <property type="project" value="InterPro"/>
</dbReference>
<dbReference type="GO" id="GO:0046677">
    <property type="term" value="P:response to antibiotic"/>
    <property type="evidence" value="ECO:0007669"/>
    <property type="project" value="UniProtKB-KW"/>
</dbReference>
<dbReference type="CDD" id="cd06173">
    <property type="entry name" value="MFS_MefA_like"/>
    <property type="match status" value="1"/>
</dbReference>
<dbReference type="Gene3D" id="1.20.1250.20">
    <property type="entry name" value="MFS general substrate transporter like domains"/>
    <property type="match status" value="2"/>
</dbReference>
<dbReference type="InterPro" id="IPR004751">
    <property type="entry name" value="Drug_antiport"/>
</dbReference>
<dbReference type="InterPro" id="IPR011701">
    <property type="entry name" value="MFS"/>
</dbReference>
<dbReference type="InterPro" id="IPR020846">
    <property type="entry name" value="MFS_dom"/>
</dbReference>
<dbReference type="InterPro" id="IPR036259">
    <property type="entry name" value="MFS_trans_sf"/>
</dbReference>
<dbReference type="NCBIfam" id="TIGR00900">
    <property type="entry name" value="2A0121"/>
    <property type="match status" value="1"/>
</dbReference>
<dbReference type="PANTHER" id="PTHR23513:SF9">
    <property type="entry name" value="ENTEROBACTIN EXPORTER ENTS"/>
    <property type="match status" value="1"/>
</dbReference>
<dbReference type="PANTHER" id="PTHR23513">
    <property type="entry name" value="INTEGRAL MEMBRANE EFFLUX PROTEIN-RELATED"/>
    <property type="match status" value="1"/>
</dbReference>
<dbReference type="Pfam" id="PF07690">
    <property type="entry name" value="MFS_1"/>
    <property type="match status" value="1"/>
</dbReference>
<dbReference type="SUPFAM" id="SSF103473">
    <property type="entry name" value="MFS general substrate transporter"/>
    <property type="match status" value="1"/>
</dbReference>
<dbReference type="PROSITE" id="PS50850">
    <property type="entry name" value="MFS"/>
    <property type="match status" value="1"/>
</dbReference>
<sequence>MTNTKRGPLLLILFAALTAGAGNGITIVAFPWLVLQHNGSALDASIVAMAGTLPLLVATLIAGAAVDYLGRRRVSMISDLLSALSVAAVPVLALIFGVDAVNVAVLAVLAGLGAFFDPAGMTARETMLPEAAGRAGWTLDHANSVYEAVFNLGYIVGPGIGGLMIATLGGINTMWVTAGAFCCSILAISVLRLEGAGAPDRSVLTEAVLAGIVEGLRFVWYTPVLRTLAIVDLVATGLYMPMESVLFPKYFTDRNEPTELGWVLMALSIGGLLGALGYAVMSRYMSRRATMLTAVITLGVAMTVIAFLPPLPLILVLCAIVGFVYGPIAPIYNYVMQTTAPQHLRGRVVGVMGSLAYAAGPLGLILAGPLADAAGLHATFLALSLPMLLLGVVAVFLPRLRELDLASKP</sequence>
<name>TAP_MYCFO</name>
<feature type="chain" id="PRO_0000447329" description="Multidrug efflux pump Tap">
    <location>
        <begin position="1"/>
        <end position="409"/>
    </location>
</feature>
<feature type="transmembrane region" description="Helical" evidence="1">
    <location>
        <begin position="10"/>
        <end position="30"/>
    </location>
</feature>
<feature type="transmembrane region" description="Helical" evidence="1">
    <location>
        <begin position="46"/>
        <end position="66"/>
    </location>
</feature>
<feature type="transmembrane region" description="Helical" evidence="1">
    <location>
        <begin position="80"/>
        <end position="98"/>
    </location>
</feature>
<feature type="transmembrane region" description="Helical" evidence="1">
    <location>
        <begin position="104"/>
        <end position="123"/>
    </location>
</feature>
<feature type="transmembrane region" description="Helical" evidence="1">
    <location>
        <begin position="144"/>
        <end position="168"/>
    </location>
</feature>
<feature type="transmembrane region" description="Helical" evidence="1">
    <location>
        <begin position="174"/>
        <end position="193"/>
    </location>
</feature>
<feature type="transmembrane region" description="Helical" evidence="1">
    <location>
        <begin position="218"/>
        <end position="240"/>
    </location>
</feature>
<feature type="transmembrane region" description="Helical" evidence="1">
    <location>
        <begin position="260"/>
        <end position="282"/>
    </location>
</feature>
<feature type="transmembrane region" description="Helical" evidence="1">
    <location>
        <begin position="289"/>
        <end position="308"/>
    </location>
</feature>
<feature type="transmembrane region" description="Helical" evidence="1">
    <location>
        <begin position="313"/>
        <end position="335"/>
    </location>
</feature>
<feature type="transmembrane region" description="Helical" evidence="1">
    <location>
        <begin position="348"/>
        <end position="370"/>
    </location>
</feature>
<feature type="transmembrane region" description="Helical" evidence="1">
    <location>
        <begin position="375"/>
        <end position="397"/>
    </location>
</feature>
<organism>
    <name type="scientific">Mycolicibacterium fortuitum</name>
    <name type="common">Mycobacterium fortuitum</name>
    <dbReference type="NCBI Taxonomy" id="1766"/>
    <lineage>
        <taxon>Bacteria</taxon>
        <taxon>Bacillati</taxon>
        <taxon>Actinomycetota</taxon>
        <taxon>Actinomycetes</taxon>
        <taxon>Mycobacteriales</taxon>
        <taxon>Mycobacteriaceae</taxon>
        <taxon>Mycolicibacterium</taxon>
    </lineage>
</organism>
<keyword id="KW-0046">Antibiotic resistance</keyword>
<keyword id="KW-0997">Cell inner membrane</keyword>
<keyword id="KW-1003">Cell membrane</keyword>
<keyword id="KW-0472">Membrane</keyword>
<keyword id="KW-0812">Transmembrane</keyword>
<keyword id="KW-1133">Transmembrane helix</keyword>
<keyword id="KW-0813">Transport</keyword>
<gene>
    <name evidence="4" type="primary">tap</name>
</gene>
<reference key="1">
    <citation type="journal article" date="1998" name="J. Bacteriol.">
        <title>Molecular cloning and characterization of Tap, a putative multidrug efflux pump present in Mycobacterium fortuitum and Mycobacterium tuberculosis.</title>
        <authorList>
            <person name="Ainsa J.A."/>
            <person name="Blokpoel M.C."/>
            <person name="Otal I."/>
            <person name="Young D.B."/>
            <person name="De Smet K.A."/>
            <person name="Martin C."/>
        </authorList>
    </citation>
    <scope>NUCLEOTIDE SEQUENCE [GENOMIC DNA]</scope>
    <scope>FUNCTION</scope>
</reference>
<reference key="2">
    <citation type="journal article" date="2006" name="J. Antimicrob. Chemother.">
        <title>Characterization of tetracycline resistance mediated by the efflux pump Tap from Mycobacterium fortuitum.</title>
        <authorList>
            <person name="Ramon-Garcia S."/>
            <person name="Martin C."/>
            <person name="Ainsa J.A."/>
            <person name="De Rossi E."/>
        </authorList>
    </citation>
    <scope>FUNCTION</scope>
    <scope>ACTIVITY REGULATION</scope>
    <scope>SUBCELLULAR LOCATION</scope>
</reference>
<protein>
    <recommendedName>
        <fullName evidence="5">Multidrug efflux pump Tap</fullName>
    </recommendedName>
    <alternativeName>
        <fullName evidence="4">Tetracycline-aminoglycoside resistance protein</fullName>
    </alternativeName>
</protein>